<feature type="chain" id="PRO_0000217495" description="Uncharacterized 51.9 kDa protein in rps4-rps11 intergenic region">
    <location>
        <begin position="1"/>
        <end position="426"/>
    </location>
</feature>
<feature type="region of interest" description="Disordered" evidence="1">
    <location>
        <begin position="17"/>
        <end position="114"/>
    </location>
</feature>
<organism>
    <name type="scientific">Euglena longa</name>
    <name type="common">Euglenophycean alga</name>
    <name type="synonym">Astasia longa</name>
    <dbReference type="NCBI Taxonomy" id="3037"/>
    <lineage>
        <taxon>Eukaryota</taxon>
        <taxon>Discoba</taxon>
        <taxon>Euglenozoa</taxon>
        <taxon>Euglenida</taxon>
        <taxon>Spirocuta</taxon>
        <taxon>Euglenophyceae</taxon>
        <taxon>Euglenales</taxon>
        <taxon>Euglenaceae</taxon>
        <taxon>Euglena</taxon>
    </lineage>
</organism>
<name>YCXC_EUGLO</name>
<accession>P58151</accession>
<comment type="subcellular location">
    <subcellularLocation>
        <location>Plastid</location>
    </subcellularLocation>
</comment>
<dbReference type="EMBL" id="AJ294725">
    <property type="protein sequence ID" value="CAC24615.1"/>
    <property type="molecule type" value="Genomic_DNA"/>
</dbReference>
<dbReference type="RefSeq" id="NP_075004.1">
    <property type="nucleotide sequence ID" value="NC_002652.1"/>
</dbReference>
<dbReference type="GeneID" id="1457323"/>
<dbReference type="GO" id="GO:0009536">
    <property type="term" value="C:plastid"/>
    <property type="evidence" value="ECO:0007669"/>
    <property type="project" value="UniProtKB-SubCell"/>
</dbReference>
<proteinExistence type="predicted"/>
<geneLocation type="non-photosynthetic plastid"/>
<reference key="1">
    <citation type="journal article" date="2000" name="Protist">
        <title>Complete gene map of the plastid genome of the nonphotosynthetic euglenoid flagellate Astasia longa.</title>
        <authorList>
            <person name="Gockel G."/>
            <person name="Hachtel W."/>
        </authorList>
    </citation>
    <scope>NUCLEOTIDE SEQUENCE [LARGE SCALE GENOMIC DNA]</scope>
    <source>
        <strain>CCAP 1204-17a</strain>
    </source>
</reference>
<protein>
    <recommendedName>
        <fullName>Uncharacterized 51.9 kDa protein in rps4-rps11 intergenic region</fullName>
    </recommendedName>
    <alternativeName>
        <fullName>ORF426</fullName>
    </alternativeName>
</protein>
<sequence>MDLFLQIRKVNLFFPDKRDRPFSPDRINRPFSPDKKGEPIFPDKRDRPFSSDRINRPFSPDKKGEPIFPDKKDRPFSSDRINRPFSPDKKGEPIFPDKRDRPFSPDKKGEYIYPDKRDRSFSPYRINRSFYQDKKGESIYLDKRDKYFFSDRKNRHFFLDKKDEPIFTDDINKSIFLDEKDKLSYVDKKNISFSVGDGKSESVYRDKMDKFIFSNESNKSFYLDKKDESFYLDMMNTPFYSDWRNRLFNPDKSNKSFSSNKKDESVFFDKRNKLFSADKGNIPFSLNEKSEPVYFDKKDKFIFSDKRDKPIFSDNKDKVFFSNKENKFIFSDEKYESIFKDRPFFIDRSKYNKPFFIDKSKYNRPFFIDKSKSNNIPFFSYQKKEPFIYRKNKPLNYQKNKNFFYKRKRKKKLNRLFCKMAMVYIL</sequence>
<evidence type="ECO:0000256" key="1">
    <source>
        <dbReference type="SAM" id="MobiDB-lite"/>
    </source>
</evidence>
<keyword id="KW-0934">Plastid</keyword>